<protein>
    <recommendedName>
        <fullName>Cytochrome b</fullName>
    </recommendedName>
    <alternativeName>
        <fullName>Complex III subunit 3</fullName>
    </alternativeName>
    <alternativeName>
        <fullName>Complex III subunit III</fullName>
    </alternativeName>
    <alternativeName>
        <fullName>Cytochrome b-c1 complex subunit 3</fullName>
    </alternativeName>
    <alternativeName>
        <fullName>Ubiquinol-cytochrome-c reductase complex cytochrome b subunit</fullName>
    </alternativeName>
</protein>
<sequence>MNKPLRNSHPLFKIANNALVDLPAPINISSWWNFGSLLGLCLIIQILTGLFLAMHYTADINLAFYSVNHICRDVNYGWLLRTLHANGASFFFICIYLHVGRGIYYGSYKFTPTWLIGVIILFLVMGTAFMGYVLPWGQMSFWGATVITNLLSAIPYLGMDLVQWLWGGFAVDNATLTRFFTFHFILPFIVLAMTMIHLLFLHQTGSNNPIGLNSNIDKIPFHPYFTFKDIVGFIVMIFILISLVLISPNLLGDPDNFIPANPLVTPAHIQPEWYFLFAYAILRSIPNKLGGVIALVLSIAILMILPFYNLSKFRGIQFYPINQVMFWSMLVTVILLTWIGARPVEEPYVLIGQILTVVYFLYYLVNPLITKWWDNLLN</sequence>
<dbReference type="EMBL" id="M37275">
    <property type="protein sequence ID" value="AAA69714.1"/>
    <property type="molecule type" value="Genomic_DNA"/>
</dbReference>
<dbReference type="EMBL" id="U37541">
    <property type="protein sequence ID" value="AAC47822.1"/>
    <property type="molecule type" value="Genomic_DNA"/>
</dbReference>
<dbReference type="EMBL" id="KJ947872">
    <property type="protein sequence ID" value="AIC64015.1"/>
    <property type="molecule type" value="Genomic_DNA"/>
</dbReference>
<dbReference type="PIR" id="S01190">
    <property type="entry name" value="S01190"/>
</dbReference>
<dbReference type="RefSeq" id="YP_009047277.1">
    <property type="nucleotide sequence ID" value="NC_024511.2"/>
</dbReference>
<dbReference type="SMR" id="P18935"/>
<dbReference type="ComplexPortal" id="CPX-8730">
    <property type="entry name" value="Mitochondrial respiratory chain complex III"/>
</dbReference>
<dbReference type="ComplexPortal" id="CPX-8737">
    <property type="entry name" value="Mitochondrial respiratory chain complex III, testis-specific variant"/>
</dbReference>
<dbReference type="FunCoup" id="P18935">
    <property type="interactions" value="152"/>
</dbReference>
<dbReference type="STRING" id="7227.FBpp0390634"/>
<dbReference type="GlyGen" id="P18935">
    <property type="glycosylation" value="1 site"/>
</dbReference>
<dbReference type="PaxDb" id="7227-FBpp0100186"/>
<dbReference type="EnsemblMetazoa" id="FBtr0433502">
    <property type="protein sequence ID" value="FBpp0390634"/>
    <property type="gene ID" value="FBgn0013678"/>
</dbReference>
<dbReference type="GeneID" id="19893556"/>
<dbReference type="KEGG" id="dme:Dmel_CG34090"/>
<dbReference type="AGR" id="FB:FBgn0013678"/>
<dbReference type="CTD" id="4519"/>
<dbReference type="FlyBase" id="FBgn0013678">
    <property type="gene designation" value="mt:Cyt-b"/>
</dbReference>
<dbReference type="VEuPathDB" id="VectorBase:FBgn0013678"/>
<dbReference type="eggNOG" id="KOG4663">
    <property type="taxonomic scope" value="Eukaryota"/>
</dbReference>
<dbReference type="HOGENOM" id="CLU_031114_3_0_1"/>
<dbReference type="InParanoid" id="P18935"/>
<dbReference type="OMA" id="NISAWWN"/>
<dbReference type="OrthoDB" id="7995168at2759"/>
<dbReference type="PhylomeDB" id="P18935"/>
<dbReference type="Reactome" id="R-DME-611105">
    <property type="pathway name" value="Respiratory electron transport"/>
</dbReference>
<dbReference type="Reactome" id="R-DME-9865881">
    <property type="pathway name" value="Complex III assembly"/>
</dbReference>
<dbReference type="BioGRID-ORCS" id="19893556">
    <property type="hits" value="0 hits in 1 CRISPR screen"/>
</dbReference>
<dbReference type="ChiTaRS" id="Cyt-b5-r">
    <property type="organism name" value="fly"/>
</dbReference>
<dbReference type="GenomeRNAi" id="19893556"/>
<dbReference type="PRO" id="PR:P18935"/>
<dbReference type="Proteomes" id="UP000000803">
    <property type="component" value="Mitochondrion"/>
</dbReference>
<dbReference type="Bgee" id="FBgn0013678">
    <property type="expression patterns" value="Expressed in adult anterior midgut class I enteroendocrine cell in adult midgut (Drosophila) and 270 other cell types or tissues"/>
</dbReference>
<dbReference type="ExpressionAtlas" id="P18935">
    <property type="expression patterns" value="baseline and differential"/>
</dbReference>
<dbReference type="GO" id="GO:0016020">
    <property type="term" value="C:membrane"/>
    <property type="evidence" value="ECO:0000318"/>
    <property type="project" value="GO_Central"/>
</dbReference>
<dbReference type="GO" id="GO:0005743">
    <property type="term" value="C:mitochondrial inner membrane"/>
    <property type="evidence" value="ECO:0000250"/>
    <property type="project" value="FlyBase"/>
</dbReference>
<dbReference type="GO" id="GO:0045275">
    <property type="term" value="C:respiratory chain complex III"/>
    <property type="evidence" value="ECO:0000318"/>
    <property type="project" value="GO_Central"/>
</dbReference>
<dbReference type="GO" id="GO:0046872">
    <property type="term" value="F:metal ion binding"/>
    <property type="evidence" value="ECO:0007669"/>
    <property type="project" value="UniProtKB-KW"/>
</dbReference>
<dbReference type="GO" id="GO:0008121">
    <property type="term" value="F:ubiquinol-cytochrome-c reductase activity"/>
    <property type="evidence" value="ECO:0007669"/>
    <property type="project" value="InterPro"/>
</dbReference>
<dbReference type="GO" id="GO:0006122">
    <property type="term" value="P:mitochondrial electron transport, ubiquinol to cytochrome c"/>
    <property type="evidence" value="ECO:0000318"/>
    <property type="project" value="GO_Central"/>
</dbReference>
<dbReference type="GO" id="GO:0007283">
    <property type="term" value="P:spermatogenesis"/>
    <property type="evidence" value="ECO:0000315"/>
    <property type="project" value="FlyBase"/>
</dbReference>
<dbReference type="CDD" id="cd00290">
    <property type="entry name" value="cytochrome_b_C"/>
    <property type="match status" value="1"/>
</dbReference>
<dbReference type="CDD" id="cd00284">
    <property type="entry name" value="Cytochrome_b_N"/>
    <property type="match status" value="1"/>
</dbReference>
<dbReference type="FunFam" id="1.20.810.10:FF:000002">
    <property type="entry name" value="Cytochrome b"/>
    <property type="match status" value="1"/>
</dbReference>
<dbReference type="Gene3D" id="1.20.810.10">
    <property type="entry name" value="Cytochrome Bc1 Complex, Chain C"/>
    <property type="match status" value="1"/>
</dbReference>
<dbReference type="InterPro" id="IPR005798">
    <property type="entry name" value="Cyt_b/b6_C"/>
</dbReference>
<dbReference type="InterPro" id="IPR036150">
    <property type="entry name" value="Cyt_b/b6_C_sf"/>
</dbReference>
<dbReference type="InterPro" id="IPR005797">
    <property type="entry name" value="Cyt_b/b6_N"/>
</dbReference>
<dbReference type="InterPro" id="IPR027387">
    <property type="entry name" value="Cytb/b6-like_sf"/>
</dbReference>
<dbReference type="InterPro" id="IPR030689">
    <property type="entry name" value="Cytochrome_b"/>
</dbReference>
<dbReference type="InterPro" id="IPR048260">
    <property type="entry name" value="Cytochrome_b_C_euk/bac"/>
</dbReference>
<dbReference type="InterPro" id="IPR048259">
    <property type="entry name" value="Cytochrome_b_N_euk/bac"/>
</dbReference>
<dbReference type="InterPro" id="IPR016174">
    <property type="entry name" value="Di-haem_cyt_TM"/>
</dbReference>
<dbReference type="PANTHER" id="PTHR19271">
    <property type="entry name" value="CYTOCHROME B"/>
    <property type="match status" value="1"/>
</dbReference>
<dbReference type="PANTHER" id="PTHR19271:SF16">
    <property type="entry name" value="CYTOCHROME B"/>
    <property type="match status" value="1"/>
</dbReference>
<dbReference type="Pfam" id="PF00032">
    <property type="entry name" value="Cytochrom_B_C"/>
    <property type="match status" value="1"/>
</dbReference>
<dbReference type="Pfam" id="PF00033">
    <property type="entry name" value="Cytochrome_B"/>
    <property type="match status" value="1"/>
</dbReference>
<dbReference type="PIRSF" id="PIRSF038885">
    <property type="entry name" value="COB"/>
    <property type="match status" value="1"/>
</dbReference>
<dbReference type="SUPFAM" id="SSF81648">
    <property type="entry name" value="a domain/subunit of cytochrome bc1 complex (Ubiquinol-cytochrome c reductase)"/>
    <property type="match status" value="1"/>
</dbReference>
<dbReference type="SUPFAM" id="SSF81342">
    <property type="entry name" value="Transmembrane di-heme cytochromes"/>
    <property type="match status" value="1"/>
</dbReference>
<dbReference type="PROSITE" id="PS51003">
    <property type="entry name" value="CYTB_CTER"/>
    <property type="match status" value="1"/>
</dbReference>
<dbReference type="PROSITE" id="PS51002">
    <property type="entry name" value="CYTB_NTER"/>
    <property type="match status" value="1"/>
</dbReference>
<geneLocation type="mitochondrion"/>
<accession>P18935</accession>
<gene>
    <name type="primary">mt:Cyt-b</name>
    <name type="synonym">Cob</name>
    <name type="synonym">cytb</name>
</gene>
<organism>
    <name type="scientific">Drosophila melanogaster</name>
    <name type="common">Fruit fly</name>
    <dbReference type="NCBI Taxonomy" id="7227"/>
    <lineage>
        <taxon>Eukaryota</taxon>
        <taxon>Metazoa</taxon>
        <taxon>Ecdysozoa</taxon>
        <taxon>Arthropoda</taxon>
        <taxon>Hexapoda</taxon>
        <taxon>Insecta</taxon>
        <taxon>Pterygota</taxon>
        <taxon>Neoptera</taxon>
        <taxon>Endopterygota</taxon>
        <taxon>Diptera</taxon>
        <taxon>Brachycera</taxon>
        <taxon>Muscomorpha</taxon>
        <taxon>Ephydroidea</taxon>
        <taxon>Drosophilidae</taxon>
        <taxon>Drosophila</taxon>
        <taxon>Sophophora</taxon>
    </lineage>
</organism>
<keyword id="KW-0249">Electron transport</keyword>
<keyword id="KW-0349">Heme</keyword>
<keyword id="KW-0408">Iron</keyword>
<keyword id="KW-0472">Membrane</keyword>
<keyword id="KW-0479">Metal-binding</keyword>
<keyword id="KW-0496">Mitochondrion</keyword>
<keyword id="KW-0999">Mitochondrion inner membrane</keyword>
<keyword id="KW-1185">Reference proteome</keyword>
<keyword id="KW-0679">Respiratory chain</keyword>
<keyword id="KW-0812">Transmembrane</keyword>
<keyword id="KW-1133">Transmembrane helix</keyword>
<keyword id="KW-0813">Transport</keyword>
<keyword id="KW-0830">Ubiquinone</keyword>
<feature type="chain" id="PRO_0000060893" description="Cytochrome b">
    <location>
        <begin position="1"/>
        <end position="378"/>
    </location>
</feature>
<feature type="transmembrane region" description="Helical" evidence="2">
    <location>
        <begin position="34"/>
        <end position="54"/>
    </location>
</feature>
<feature type="transmembrane region" description="Helical" evidence="2">
    <location>
        <begin position="78"/>
        <end position="99"/>
    </location>
</feature>
<feature type="transmembrane region" description="Helical" evidence="2">
    <location>
        <begin position="114"/>
        <end position="134"/>
    </location>
</feature>
<feature type="transmembrane region" description="Helical" evidence="2">
    <location>
        <begin position="179"/>
        <end position="199"/>
    </location>
</feature>
<feature type="transmembrane region" description="Helical" evidence="2">
    <location>
        <begin position="227"/>
        <end position="247"/>
    </location>
</feature>
<feature type="transmembrane region" description="Helical" evidence="2">
    <location>
        <begin position="289"/>
        <end position="309"/>
    </location>
</feature>
<feature type="transmembrane region" description="Helical" evidence="2">
    <location>
        <begin position="321"/>
        <end position="341"/>
    </location>
</feature>
<feature type="transmembrane region" description="Helical" evidence="2">
    <location>
        <begin position="348"/>
        <end position="368"/>
    </location>
</feature>
<feature type="binding site" description="axial binding residue" evidence="2">
    <location>
        <position position="84"/>
    </location>
    <ligand>
        <name>heme b</name>
        <dbReference type="ChEBI" id="CHEBI:60344"/>
        <label>b562</label>
    </ligand>
    <ligandPart>
        <name>Fe</name>
        <dbReference type="ChEBI" id="CHEBI:18248"/>
    </ligandPart>
</feature>
<feature type="binding site" description="axial binding residue" evidence="2">
    <location>
        <position position="98"/>
    </location>
    <ligand>
        <name>heme b</name>
        <dbReference type="ChEBI" id="CHEBI:60344"/>
        <label>b566</label>
    </ligand>
    <ligandPart>
        <name>Fe</name>
        <dbReference type="ChEBI" id="CHEBI:18248"/>
    </ligandPart>
</feature>
<feature type="binding site" description="axial binding residue" evidence="2">
    <location>
        <position position="183"/>
    </location>
    <ligand>
        <name>heme b</name>
        <dbReference type="ChEBI" id="CHEBI:60344"/>
        <label>b562</label>
    </ligand>
    <ligandPart>
        <name>Fe</name>
        <dbReference type="ChEBI" id="CHEBI:18248"/>
    </ligandPart>
</feature>
<feature type="binding site" description="axial binding residue" evidence="2">
    <location>
        <position position="197"/>
    </location>
    <ligand>
        <name>heme b</name>
        <dbReference type="ChEBI" id="CHEBI:60344"/>
        <label>b566</label>
    </ligand>
    <ligandPart>
        <name>Fe</name>
        <dbReference type="ChEBI" id="CHEBI:18248"/>
    </ligandPart>
</feature>
<feature type="binding site" evidence="2">
    <location>
        <position position="202"/>
    </location>
    <ligand>
        <name>a ubiquinone</name>
        <dbReference type="ChEBI" id="CHEBI:16389"/>
    </ligand>
</feature>
<feature type="sequence conflict" description="In Ref. 1; AAA69714 and 2; AAC47822." evidence="6" ref="1 2">
    <original>G</original>
    <variation>V</variation>
    <location>
        <position position="143"/>
    </location>
</feature>
<feature type="sequence conflict" description="In Ref. 1; AAA69714 and 2; AAC47822." evidence="6" ref="1 2">
    <original>S</original>
    <variation>Y</variation>
    <location>
        <position position="152"/>
    </location>
</feature>
<feature type="sequence conflict" description="In Ref. 1; AAA69714 and 2; AAC47822." evidence="6" ref="1 2">
    <original>N</original>
    <variation>T</variation>
    <location>
        <position position="261"/>
    </location>
</feature>
<comment type="function">
    <text evidence="2">Component of the ubiquinol-cytochrome c reductase complex (complex III or cytochrome b-c1 complex) that is part of the mitochondrial respiratory chain. The b-c1 complex mediates electron transfer from ubiquinol to cytochrome c. Contributes to the generation of a proton gradient across the mitochondrial membrane that is then used for ATP synthesis.</text>
</comment>
<comment type="cofactor">
    <cofactor evidence="2">
        <name>heme b</name>
        <dbReference type="ChEBI" id="CHEBI:60344"/>
    </cofactor>
    <text evidence="2">Binds 2 heme b groups non-covalently.</text>
</comment>
<comment type="subunit">
    <text evidence="2">The main subunits of complex b-c1 are: cytochrome b, cytochrome c1 and the Rieske protein.</text>
</comment>
<comment type="subcellular location">
    <subcellularLocation>
        <location evidence="3">Mitochondrion inner membrane</location>
        <topology evidence="3">Multi-pass membrane protein</topology>
    </subcellularLocation>
</comment>
<comment type="miscellaneous">
    <text evidence="1">Heme 1 (or BL or b562) is low-potential and absorbs at about 562 nm, and heme 2 (or BH or b566) is high-potential and absorbs at about 566 nm.</text>
</comment>
<comment type="similarity">
    <text evidence="4 5">Belongs to the cytochrome b family.</text>
</comment>
<comment type="caution">
    <text evidence="2">The full-length protein contains only eight transmembrane helices, not nine as predicted by bioinformatics tools.</text>
</comment>
<reference key="1">
    <citation type="journal article" date="1988" name="Genetics">
        <title>Drosophila melanogaster mitochondrial DNA: gene organization and evolutionary considerations.</title>
        <authorList>
            <person name="Garesse R."/>
        </authorList>
    </citation>
    <scope>NUCLEOTIDE SEQUENCE [GENOMIC DNA]</scope>
    <source>
        <strain>Bretagne</strain>
    </source>
</reference>
<reference key="2">
    <citation type="journal article" date="1995" name="Insect Mol. Biol.">
        <title>Drosophila melanogaster mitochondrial DNA: completion of the nucleotide sequence and evolutionary comparisons.</title>
        <authorList>
            <person name="Lewis D.L."/>
            <person name="Farr C.L."/>
            <person name="Kaguni L.S."/>
        </authorList>
    </citation>
    <scope>NUCLEOTIDE SEQUENCE [LARGE SCALE GENOMIC DNA]</scope>
</reference>
<reference key="3">
    <citation type="submission" date="2014-08" db="EMBL/GenBank/DDBJ databases">
        <authorList>
            <person name="Wan K."/>
            <person name="Celniker S."/>
        </authorList>
    </citation>
    <scope>NUCLEOTIDE SEQUENCE [LARGE SCALE GENOMIC DNA]</scope>
    <source>
        <strain>Berkeley</strain>
    </source>
</reference>
<proteinExistence type="inferred from homology"/>
<evidence type="ECO:0000250" key="1"/>
<evidence type="ECO:0000250" key="2">
    <source>
        <dbReference type="UniProtKB" id="P00157"/>
    </source>
</evidence>
<evidence type="ECO:0000250" key="3">
    <source>
        <dbReference type="UniProtKB" id="P00163"/>
    </source>
</evidence>
<evidence type="ECO:0000255" key="4">
    <source>
        <dbReference type="PROSITE-ProRule" id="PRU00967"/>
    </source>
</evidence>
<evidence type="ECO:0000255" key="5">
    <source>
        <dbReference type="PROSITE-ProRule" id="PRU00968"/>
    </source>
</evidence>
<evidence type="ECO:0000305" key="6"/>
<name>CYB_DROME</name>